<keyword id="KW-1003">Cell membrane</keyword>
<keyword id="KW-1015">Disulfide bond</keyword>
<keyword id="KW-0297">G-protein coupled receptor</keyword>
<keyword id="KW-0325">Glycoprotein</keyword>
<keyword id="KW-0472">Membrane</keyword>
<keyword id="KW-0675">Receptor</keyword>
<keyword id="KW-0807">Transducer</keyword>
<keyword id="KW-0812">Transmembrane</keyword>
<keyword id="KW-1133">Transmembrane helix</keyword>
<evidence type="ECO:0000255" key="1"/>
<evidence type="ECO:0000255" key="2">
    <source>
        <dbReference type="PROSITE-ProRule" id="PRU00521"/>
    </source>
</evidence>
<feature type="chain" id="PRO_0000069694" description="Isotocin receptor">
    <location>
        <begin position="1"/>
        <end position="390"/>
    </location>
</feature>
<feature type="topological domain" description="Extracellular" evidence="1">
    <location>
        <begin position="1"/>
        <end position="48"/>
    </location>
</feature>
<feature type="transmembrane region" description="Helical; Name=1" evidence="1">
    <location>
        <begin position="49"/>
        <end position="69"/>
    </location>
</feature>
<feature type="topological domain" description="Cytoplasmic" evidence="1">
    <location>
        <begin position="70"/>
        <end position="86"/>
    </location>
</feature>
<feature type="transmembrane region" description="Helical; Name=2" evidence="1">
    <location>
        <begin position="87"/>
        <end position="107"/>
    </location>
</feature>
<feature type="topological domain" description="Extracellular" evidence="1">
    <location>
        <begin position="108"/>
        <end position="124"/>
    </location>
</feature>
<feature type="transmembrane region" description="Helical; Name=3" evidence="1">
    <location>
        <begin position="125"/>
        <end position="145"/>
    </location>
</feature>
<feature type="topological domain" description="Cytoplasmic" evidence="1">
    <location>
        <begin position="146"/>
        <end position="160"/>
    </location>
</feature>
<feature type="transmembrane region" description="Helical; Name=4" evidence="1">
    <location>
        <begin position="161"/>
        <end position="181"/>
    </location>
</feature>
<feature type="topological domain" description="Extracellular" evidence="1">
    <location>
        <begin position="182"/>
        <end position="206"/>
    </location>
</feature>
<feature type="transmembrane region" description="Helical; Name=5" evidence="1">
    <location>
        <begin position="207"/>
        <end position="227"/>
    </location>
</feature>
<feature type="topological domain" description="Cytoplasmic" evidence="1">
    <location>
        <begin position="228"/>
        <end position="276"/>
    </location>
</feature>
<feature type="transmembrane region" description="Helical; Name=6" evidence="1">
    <location>
        <begin position="277"/>
        <end position="297"/>
    </location>
</feature>
<feature type="topological domain" description="Extracellular" evidence="1">
    <location>
        <begin position="298"/>
        <end position="311"/>
    </location>
</feature>
<feature type="transmembrane region" description="Helical; Name=7" evidence="1">
    <location>
        <begin position="312"/>
        <end position="332"/>
    </location>
</feature>
<feature type="topological domain" description="Cytoplasmic" evidence="1">
    <location>
        <begin position="333"/>
        <end position="390"/>
    </location>
</feature>
<feature type="glycosylation site" description="N-linked (GlcNAc...) asparagine" evidence="1">
    <location>
        <position position="14"/>
    </location>
</feature>
<feature type="glycosylation site" description="N-linked (GlcNAc...) asparagine" evidence="1">
    <location>
        <position position="19"/>
    </location>
</feature>
<feature type="glycosylation site" description="N-linked (GlcNAc...) asparagine" evidence="1">
    <location>
        <position position="24"/>
    </location>
</feature>
<feature type="glycosylation site" description="N-linked (GlcNAc...) asparagine" evidence="1">
    <location>
        <position position="30"/>
    </location>
</feature>
<feature type="disulfide bond" evidence="2">
    <location>
        <begin position="116"/>
        <end position="191"/>
    </location>
</feature>
<name>ITR_CATCO</name>
<proteinExistence type="evidence at transcript level"/>
<dbReference type="EMBL" id="X87783">
    <property type="protein sequence ID" value="CAA61050.1"/>
    <property type="molecule type" value="mRNA"/>
</dbReference>
<dbReference type="PIR" id="S66497">
    <property type="entry name" value="S66497"/>
</dbReference>
<dbReference type="SMR" id="Q90334"/>
<dbReference type="GO" id="GO:0005886">
    <property type="term" value="C:plasma membrane"/>
    <property type="evidence" value="ECO:0007669"/>
    <property type="project" value="UniProtKB-SubCell"/>
</dbReference>
<dbReference type="GO" id="GO:0004990">
    <property type="term" value="F:oxytocin receptor activity"/>
    <property type="evidence" value="ECO:0007669"/>
    <property type="project" value="InterPro"/>
</dbReference>
<dbReference type="GO" id="GO:0042277">
    <property type="term" value="F:peptide binding"/>
    <property type="evidence" value="ECO:0007669"/>
    <property type="project" value="TreeGrafter"/>
</dbReference>
<dbReference type="GO" id="GO:0005000">
    <property type="term" value="F:vasopressin receptor activity"/>
    <property type="evidence" value="ECO:0007669"/>
    <property type="project" value="InterPro"/>
</dbReference>
<dbReference type="GO" id="GO:0032870">
    <property type="term" value="P:cellular response to hormone stimulus"/>
    <property type="evidence" value="ECO:0007669"/>
    <property type="project" value="TreeGrafter"/>
</dbReference>
<dbReference type="GO" id="GO:0060137">
    <property type="term" value="P:maternal process involved in parturition"/>
    <property type="evidence" value="ECO:0007669"/>
    <property type="project" value="TreeGrafter"/>
</dbReference>
<dbReference type="GO" id="GO:0045907">
    <property type="term" value="P:positive regulation of vasoconstriction"/>
    <property type="evidence" value="ECO:0007669"/>
    <property type="project" value="TreeGrafter"/>
</dbReference>
<dbReference type="GO" id="GO:0001992">
    <property type="term" value="P:regulation of systemic arterial blood pressure by vasopressin"/>
    <property type="evidence" value="ECO:0007669"/>
    <property type="project" value="TreeGrafter"/>
</dbReference>
<dbReference type="CDD" id="cd15387">
    <property type="entry name" value="7tmA_OT_R"/>
    <property type="match status" value="1"/>
</dbReference>
<dbReference type="FunFam" id="1.20.1070.10:FF:000145">
    <property type="entry name" value="Oxytocin receptor"/>
    <property type="match status" value="1"/>
</dbReference>
<dbReference type="Gene3D" id="1.20.1070.10">
    <property type="entry name" value="Rhodopsin 7-helix transmembrane proteins"/>
    <property type="match status" value="1"/>
</dbReference>
<dbReference type="InterPro" id="IPR000276">
    <property type="entry name" value="GPCR_Rhodpsn"/>
</dbReference>
<dbReference type="InterPro" id="IPR017452">
    <property type="entry name" value="GPCR_Rhodpsn_7TM"/>
</dbReference>
<dbReference type="InterPro" id="IPR002062">
    <property type="entry name" value="Oxytocn_rcpt"/>
</dbReference>
<dbReference type="InterPro" id="IPR001817">
    <property type="entry name" value="Vasoprsn_rcpt"/>
</dbReference>
<dbReference type="PANTHER" id="PTHR24241">
    <property type="entry name" value="NEUROPEPTIDE RECEPTOR-RELATED G-PROTEIN COUPLED RECEPTOR"/>
    <property type="match status" value="1"/>
</dbReference>
<dbReference type="PANTHER" id="PTHR24241:SF89">
    <property type="entry name" value="OXYTOCIN RECEPTOR"/>
    <property type="match status" value="1"/>
</dbReference>
<dbReference type="Pfam" id="PF00001">
    <property type="entry name" value="7tm_1"/>
    <property type="match status" value="1"/>
</dbReference>
<dbReference type="PRINTS" id="PR00237">
    <property type="entry name" value="GPCRRHODOPSN"/>
</dbReference>
<dbReference type="PRINTS" id="PR00665">
    <property type="entry name" value="OXYTOCINR"/>
</dbReference>
<dbReference type="PRINTS" id="PR00896">
    <property type="entry name" value="VASOPRESSINR"/>
</dbReference>
<dbReference type="SMART" id="SM01381">
    <property type="entry name" value="7TM_GPCR_Srsx"/>
    <property type="match status" value="1"/>
</dbReference>
<dbReference type="SUPFAM" id="SSF81321">
    <property type="entry name" value="Family A G protein-coupled receptor-like"/>
    <property type="match status" value="1"/>
</dbReference>
<dbReference type="PROSITE" id="PS00237">
    <property type="entry name" value="G_PROTEIN_RECEP_F1_1"/>
    <property type="match status" value="1"/>
</dbReference>
<dbReference type="PROSITE" id="PS50262">
    <property type="entry name" value="G_PROTEIN_RECEP_F1_2"/>
    <property type="match status" value="1"/>
</dbReference>
<reference key="1">
    <citation type="journal article" date="1995" name="FEBS Lett.">
        <title>Teleost isotocin receptor: structure, functional expression, mRNA distribution and phylogeny.</title>
        <authorList>
            <person name="Hausmann H."/>
            <person name="Meyerhof W."/>
            <person name="Zwiers H."/>
            <person name="Lederis K."/>
            <person name="Richter D."/>
        </authorList>
    </citation>
    <scope>NUCLEOTIDE SEQUENCE [MRNA]</scope>
    <source>
        <tissue>Brain</tissue>
    </source>
</reference>
<sequence length="390" mass="44504">MEEMFKEQDFWSFNESSRNSTVGNETFGGNQTVNPLKRNEEVAKVEVTVLALVLFLALAGNLCVLIAIYTAKHTQSRMYYLMKHLSIADLVVAVFQVLPQLIWDITFRFYGPDFLCRLVKYLQTVGMFASTYMLVLMSIDRCIAICQPLRSLHKRKDRCYVIVSWALSLVFSVPQVYIFSLREIGNGVYDCWGDFVQPWGAKAYITWISLTIYIIPVAILGGCYGLISFKIWQNFKRKTKKDQCITLTTAASKANALARVSSVKLVSKAKITTVKMTFVIVLAYIVCWTPFFFVQMWSAWDPEAPREAMPFIISMLLASLNSCCNPWIYMFFAGHLFHDLKQSLLCCSTLYLKSSQCRCDQEHDSRKSNCSTYVIKSTSSQRSITQSSIT</sequence>
<protein>
    <recommendedName>
        <fullName>Isotocin receptor</fullName>
        <shortName>ITR</shortName>
    </recommendedName>
</protein>
<comment type="function">
    <text>Binds to isotocin. Can also be activated by vasotocin, mesotocin, oxytocin and Arg-vasopressin, although these have lower potencies than isotocin. Produces an induction of membrane chloride currents indicating that it is coupled to the inositol phosphate/calcium pathway.</text>
</comment>
<comment type="subcellular location">
    <subcellularLocation>
        <location>Cell membrane</location>
        <topology>Multi-pass membrane protein</topology>
    </subcellularLocation>
</comment>
<comment type="tissue specificity">
    <text>Expressed in brain, intestine, bladder, skeletal muscle, lateral line, gills and kidney.</text>
</comment>
<comment type="similarity">
    <text evidence="2">Belongs to the G-protein coupled receptor 1 family. Vasopressin/oxytocin receptor subfamily.</text>
</comment>
<accession>Q90334</accession>
<organism>
    <name type="scientific">Catostomus commersonii</name>
    <name type="common">White sucker</name>
    <name type="synonym">Cyprinus commersonnii</name>
    <dbReference type="NCBI Taxonomy" id="7971"/>
    <lineage>
        <taxon>Eukaryota</taxon>
        <taxon>Metazoa</taxon>
        <taxon>Chordata</taxon>
        <taxon>Craniata</taxon>
        <taxon>Vertebrata</taxon>
        <taxon>Euteleostomi</taxon>
        <taxon>Actinopterygii</taxon>
        <taxon>Neopterygii</taxon>
        <taxon>Teleostei</taxon>
        <taxon>Ostariophysi</taxon>
        <taxon>Cypriniformes</taxon>
        <taxon>Catostomoidei</taxon>
        <taxon>Catostomidae</taxon>
        <taxon>Catostomus</taxon>
    </lineage>
</organism>